<dbReference type="EMBL" id="CU928145">
    <property type="protein sequence ID" value="CAV00052.1"/>
    <property type="molecule type" value="Genomic_DNA"/>
</dbReference>
<dbReference type="RefSeq" id="WP_001138043.1">
    <property type="nucleotide sequence ID" value="NZ_CP028304.1"/>
</dbReference>
<dbReference type="SMR" id="B7L4L6"/>
<dbReference type="GeneID" id="93778657"/>
<dbReference type="KEGG" id="eck:EC55989_3744"/>
<dbReference type="HOGENOM" id="CLU_072226_1_1_6"/>
<dbReference type="Proteomes" id="UP000000746">
    <property type="component" value="Chromosome"/>
</dbReference>
<dbReference type="GO" id="GO:0015935">
    <property type="term" value="C:small ribosomal subunit"/>
    <property type="evidence" value="ECO:0007669"/>
    <property type="project" value="InterPro"/>
</dbReference>
<dbReference type="GO" id="GO:0019843">
    <property type="term" value="F:rRNA binding"/>
    <property type="evidence" value="ECO:0007669"/>
    <property type="project" value="UniProtKB-UniRule"/>
</dbReference>
<dbReference type="GO" id="GO:0003735">
    <property type="term" value="F:structural constituent of ribosome"/>
    <property type="evidence" value="ECO:0007669"/>
    <property type="project" value="InterPro"/>
</dbReference>
<dbReference type="GO" id="GO:0000049">
    <property type="term" value="F:tRNA binding"/>
    <property type="evidence" value="ECO:0007669"/>
    <property type="project" value="UniProtKB-UniRule"/>
</dbReference>
<dbReference type="GO" id="GO:0006412">
    <property type="term" value="P:translation"/>
    <property type="evidence" value="ECO:0007669"/>
    <property type="project" value="UniProtKB-UniRule"/>
</dbReference>
<dbReference type="CDD" id="cd14869">
    <property type="entry name" value="uS7_Bacteria"/>
    <property type="match status" value="1"/>
</dbReference>
<dbReference type="FunFam" id="1.10.455.10:FF:000001">
    <property type="entry name" value="30S ribosomal protein S7"/>
    <property type="match status" value="1"/>
</dbReference>
<dbReference type="Gene3D" id="1.10.455.10">
    <property type="entry name" value="Ribosomal protein S7 domain"/>
    <property type="match status" value="1"/>
</dbReference>
<dbReference type="HAMAP" id="MF_00480_B">
    <property type="entry name" value="Ribosomal_uS7_B"/>
    <property type="match status" value="1"/>
</dbReference>
<dbReference type="InterPro" id="IPR000235">
    <property type="entry name" value="Ribosomal_uS7"/>
</dbReference>
<dbReference type="InterPro" id="IPR005717">
    <property type="entry name" value="Ribosomal_uS7_bac/org-type"/>
</dbReference>
<dbReference type="InterPro" id="IPR020606">
    <property type="entry name" value="Ribosomal_uS7_CS"/>
</dbReference>
<dbReference type="InterPro" id="IPR023798">
    <property type="entry name" value="Ribosomal_uS7_dom"/>
</dbReference>
<dbReference type="InterPro" id="IPR036823">
    <property type="entry name" value="Ribosomal_uS7_dom_sf"/>
</dbReference>
<dbReference type="NCBIfam" id="TIGR01029">
    <property type="entry name" value="rpsG_bact"/>
    <property type="match status" value="1"/>
</dbReference>
<dbReference type="PANTHER" id="PTHR11205">
    <property type="entry name" value="RIBOSOMAL PROTEIN S7"/>
    <property type="match status" value="1"/>
</dbReference>
<dbReference type="Pfam" id="PF00177">
    <property type="entry name" value="Ribosomal_S7"/>
    <property type="match status" value="1"/>
</dbReference>
<dbReference type="PIRSF" id="PIRSF002122">
    <property type="entry name" value="RPS7p_RPS7a_RPS5e_RPS7o"/>
    <property type="match status" value="1"/>
</dbReference>
<dbReference type="SUPFAM" id="SSF47973">
    <property type="entry name" value="Ribosomal protein S7"/>
    <property type="match status" value="1"/>
</dbReference>
<dbReference type="PROSITE" id="PS00052">
    <property type="entry name" value="RIBOSOMAL_S7"/>
    <property type="match status" value="1"/>
</dbReference>
<gene>
    <name evidence="1" type="primary">rpsG</name>
    <name type="ordered locus">EC55989_3744</name>
</gene>
<organism>
    <name type="scientific">Escherichia coli (strain 55989 / EAEC)</name>
    <dbReference type="NCBI Taxonomy" id="585055"/>
    <lineage>
        <taxon>Bacteria</taxon>
        <taxon>Pseudomonadati</taxon>
        <taxon>Pseudomonadota</taxon>
        <taxon>Gammaproteobacteria</taxon>
        <taxon>Enterobacterales</taxon>
        <taxon>Enterobacteriaceae</taxon>
        <taxon>Escherichia</taxon>
    </lineage>
</organism>
<proteinExistence type="inferred from homology"/>
<name>RS7_ECO55</name>
<reference key="1">
    <citation type="journal article" date="2009" name="PLoS Genet.">
        <title>Organised genome dynamics in the Escherichia coli species results in highly diverse adaptive paths.</title>
        <authorList>
            <person name="Touchon M."/>
            <person name="Hoede C."/>
            <person name="Tenaillon O."/>
            <person name="Barbe V."/>
            <person name="Baeriswyl S."/>
            <person name="Bidet P."/>
            <person name="Bingen E."/>
            <person name="Bonacorsi S."/>
            <person name="Bouchier C."/>
            <person name="Bouvet O."/>
            <person name="Calteau A."/>
            <person name="Chiapello H."/>
            <person name="Clermont O."/>
            <person name="Cruveiller S."/>
            <person name="Danchin A."/>
            <person name="Diard M."/>
            <person name="Dossat C."/>
            <person name="Karoui M.E."/>
            <person name="Frapy E."/>
            <person name="Garry L."/>
            <person name="Ghigo J.M."/>
            <person name="Gilles A.M."/>
            <person name="Johnson J."/>
            <person name="Le Bouguenec C."/>
            <person name="Lescat M."/>
            <person name="Mangenot S."/>
            <person name="Martinez-Jehanne V."/>
            <person name="Matic I."/>
            <person name="Nassif X."/>
            <person name="Oztas S."/>
            <person name="Petit M.A."/>
            <person name="Pichon C."/>
            <person name="Rouy Z."/>
            <person name="Ruf C.S."/>
            <person name="Schneider D."/>
            <person name="Tourret J."/>
            <person name="Vacherie B."/>
            <person name="Vallenet D."/>
            <person name="Medigue C."/>
            <person name="Rocha E.P.C."/>
            <person name="Denamur E."/>
        </authorList>
    </citation>
    <scope>NUCLEOTIDE SEQUENCE [LARGE SCALE GENOMIC DNA]</scope>
    <source>
        <strain>55989 / EAEC</strain>
    </source>
</reference>
<protein>
    <recommendedName>
        <fullName evidence="1">Small ribosomal subunit protein uS7</fullName>
    </recommendedName>
    <alternativeName>
        <fullName evidence="2">30S ribosomal protein S7</fullName>
    </alternativeName>
</protein>
<evidence type="ECO:0000255" key="1">
    <source>
        <dbReference type="HAMAP-Rule" id="MF_00480"/>
    </source>
</evidence>
<evidence type="ECO:0000305" key="2"/>
<keyword id="KW-1185">Reference proteome</keyword>
<keyword id="KW-0687">Ribonucleoprotein</keyword>
<keyword id="KW-0689">Ribosomal protein</keyword>
<keyword id="KW-0694">RNA-binding</keyword>
<keyword id="KW-0699">rRNA-binding</keyword>
<keyword id="KW-0820">tRNA-binding</keyword>
<comment type="function">
    <text evidence="1">One of the primary rRNA binding proteins, it binds directly to 16S rRNA where it nucleates assembly of the head domain of the 30S subunit. Is located at the subunit interface close to the decoding center, probably blocks exit of the E-site tRNA.</text>
</comment>
<comment type="subunit">
    <text evidence="1">Part of the 30S ribosomal subunit. Contacts proteins S9 and S11.</text>
</comment>
<comment type="similarity">
    <text evidence="1">Belongs to the universal ribosomal protein uS7 family.</text>
</comment>
<accession>B7L4L6</accession>
<feature type="chain" id="PRO_1000135603" description="Small ribosomal subunit protein uS7">
    <location>
        <begin position="1"/>
        <end position="156"/>
    </location>
</feature>
<sequence>MPRRRVIGQRKILPDPKFGSELLAKFVNILMVDGKKSTAESIVYSALETLAQRSGKSELEAFEVALENVRPTVEVKSRRVGGSTYQVPVEVRPVRRNALAMRWIVEAARKRGDKSMALRLANELSDAAENKGTAVKKREDVHRMAEANKAFAHYRW</sequence>